<sequence>MLYLFFALIFIISCSTKVESKKKYTYSFPKTYKEEKPTRGSLFKSPQSAYLYGSVRASEVGDVIYIRVIESINAIESVSTNVGRSTSFSNAISSFFGVHPATLKNLGAGGKSSFASKGGSKFQQSGVLTTTLAGRVVKVFPNGTMLVEAKKYIEVNGVKREFLLRGIVRPEDIDSNNTVTSDKIADMEIFFEGRGYIVRGGEPGWLAKIFAILFPF</sequence>
<organism>
    <name type="scientific">Aquifex aeolicus (strain VF5)</name>
    <dbReference type="NCBI Taxonomy" id="224324"/>
    <lineage>
        <taxon>Bacteria</taxon>
        <taxon>Pseudomonadati</taxon>
        <taxon>Aquificota</taxon>
        <taxon>Aquificia</taxon>
        <taxon>Aquificales</taxon>
        <taxon>Aquificaceae</taxon>
        <taxon>Aquifex</taxon>
    </lineage>
</organism>
<keyword id="KW-0975">Bacterial flagellum</keyword>
<keyword id="KW-0998">Cell outer membrane</keyword>
<keyword id="KW-0449">Lipoprotein</keyword>
<keyword id="KW-0472">Membrane</keyword>
<keyword id="KW-0564">Palmitate</keyword>
<keyword id="KW-1185">Reference proteome</keyword>
<keyword id="KW-0732">Signal</keyword>
<reference key="1">
    <citation type="journal article" date="1998" name="Nature">
        <title>The complete genome of the hyperthermophilic bacterium Aquifex aeolicus.</title>
        <authorList>
            <person name="Deckert G."/>
            <person name="Warren P.V."/>
            <person name="Gaasterland T."/>
            <person name="Young W.G."/>
            <person name="Lenox A.L."/>
            <person name="Graham D.E."/>
            <person name="Overbeek R."/>
            <person name="Snead M.A."/>
            <person name="Keller M."/>
            <person name="Aujay M."/>
            <person name="Huber R."/>
            <person name="Feldman R.A."/>
            <person name="Short J.M."/>
            <person name="Olsen G.J."/>
            <person name="Swanson R.V."/>
        </authorList>
    </citation>
    <scope>NUCLEOTIDE SEQUENCE [LARGE SCALE GENOMIC DNA]</scope>
    <source>
        <strain>VF5</strain>
    </source>
</reference>
<accession>O67609</accession>
<feature type="signal peptide" evidence="2">
    <location>
        <begin position="1"/>
        <end position="13"/>
    </location>
</feature>
<feature type="chain" id="PRO_0000009422" description="Flagellar L-ring protein">
    <location>
        <begin position="14"/>
        <end position="216"/>
    </location>
</feature>
<feature type="lipid moiety-binding region" description="N-palmitoyl cysteine" evidence="2">
    <location>
        <position position="14"/>
    </location>
</feature>
<feature type="lipid moiety-binding region" description="S-diacylglycerol cysteine" evidence="2">
    <location>
        <position position="14"/>
    </location>
</feature>
<name>FLGH_AQUAE</name>
<dbReference type="EMBL" id="AE000657">
    <property type="protein sequence ID" value="AAC07570.1"/>
    <property type="molecule type" value="Genomic_DNA"/>
</dbReference>
<dbReference type="PIR" id="G70447">
    <property type="entry name" value="G70447"/>
</dbReference>
<dbReference type="RefSeq" id="NP_214175.1">
    <property type="nucleotide sequence ID" value="NC_000918.1"/>
</dbReference>
<dbReference type="RefSeq" id="WP_010881112.1">
    <property type="nucleotide sequence ID" value="NC_000918.1"/>
</dbReference>
<dbReference type="SMR" id="O67609"/>
<dbReference type="FunCoup" id="O67609">
    <property type="interactions" value="48"/>
</dbReference>
<dbReference type="STRING" id="224324.aq_1714"/>
<dbReference type="EnsemblBacteria" id="AAC07570">
    <property type="protein sequence ID" value="AAC07570"/>
    <property type="gene ID" value="aq_1714"/>
</dbReference>
<dbReference type="KEGG" id="aae:aq_1714"/>
<dbReference type="eggNOG" id="COG2063">
    <property type="taxonomic scope" value="Bacteria"/>
</dbReference>
<dbReference type="HOGENOM" id="CLU_069313_1_1_0"/>
<dbReference type="InParanoid" id="O67609"/>
<dbReference type="OrthoDB" id="9789227at2"/>
<dbReference type="Proteomes" id="UP000000798">
    <property type="component" value="Chromosome"/>
</dbReference>
<dbReference type="GO" id="GO:0009427">
    <property type="term" value="C:bacterial-type flagellum basal body, distal rod, L ring"/>
    <property type="evidence" value="ECO:0007669"/>
    <property type="project" value="InterPro"/>
</dbReference>
<dbReference type="GO" id="GO:0009279">
    <property type="term" value="C:cell outer membrane"/>
    <property type="evidence" value="ECO:0007669"/>
    <property type="project" value="UniProtKB-SubCell"/>
</dbReference>
<dbReference type="GO" id="GO:0003774">
    <property type="term" value="F:cytoskeletal motor activity"/>
    <property type="evidence" value="ECO:0007669"/>
    <property type="project" value="InterPro"/>
</dbReference>
<dbReference type="GO" id="GO:0071973">
    <property type="term" value="P:bacterial-type flagellum-dependent cell motility"/>
    <property type="evidence" value="ECO:0007669"/>
    <property type="project" value="InterPro"/>
</dbReference>
<dbReference type="HAMAP" id="MF_00415">
    <property type="entry name" value="FlgH"/>
    <property type="match status" value="1"/>
</dbReference>
<dbReference type="InterPro" id="IPR000527">
    <property type="entry name" value="Flag_Lring"/>
</dbReference>
<dbReference type="PANTHER" id="PTHR34933">
    <property type="entry name" value="FLAGELLAR L-RING PROTEIN"/>
    <property type="match status" value="1"/>
</dbReference>
<dbReference type="PANTHER" id="PTHR34933:SF1">
    <property type="entry name" value="FLAGELLAR L-RING PROTEIN"/>
    <property type="match status" value="1"/>
</dbReference>
<dbReference type="Pfam" id="PF02107">
    <property type="entry name" value="FlgH"/>
    <property type="match status" value="1"/>
</dbReference>
<dbReference type="PRINTS" id="PR01008">
    <property type="entry name" value="FLGLRINGFLGH"/>
</dbReference>
<proteinExistence type="inferred from homology"/>
<protein>
    <recommendedName>
        <fullName>Flagellar L-ring protein</fullName>
    </recommendedName>
    <alternativeName>
        <fullName>Basal body L-ring protein</fullName>
    </alternativeName>
</protein>
<gene>
    <name type="primary">flgH</name>
    <name type="ordered locus">aq_1714</name>
</gene>
<evidence type="ECO:0000250" key="1"/>
<evidence type="ECO:0000255" key="2"/>
<evidence type="ECO:0000305" key="3"/>
<comment type="function">
    <text evidence="1">Assembles around the rod to form the L-ring and probably protects the motor/basal body from shearing forces during rotation.</text>
</comment>
<comment type="subunit">
    <text evidence="1">The basal body constitutes a major portion of the flagellar organelle and consists of four rings (L,P,S, and M) mounted on a central rod.</text>
</comment>
<comment type="subcellular location">
    <subcellularLocation>
        <location evidence="1">Cell outer membrane</location>
        <topology evidence="1">Lipid-anchor</topology>
    </subcellularLocation>
    <subcellularLocation>
        <location evidence="1">Bacterial flagellum basal body</location>
    </subcellularLocation>
</comment>
<comment type="similarity">
    <text evidence="3">Belongs to the FlgH family.</text>
</comment>